<evidence type="ECO:0000250" key="1"/>
<evidence type="ECO:0000255" key="2">
    <source>
        <dbReference type="PROSITE-ProRule" id="PRU01126"/>
    </source>
</evidence>
<evidence type="ECO:0000305" key="3"/>
<proteinExistence type="inferred from homology"/>
<sequence length="311" mass="35610">MHEIYLAGGCFWGVEEYFSRVPGVTDAVSGYANGRGETTKYELINQTGHAETVHVTYDAKQISLKEILLHYFRIINPTSKNKQGNDVGTQYRTGVYYTDDKDLEVINQVFDEVAKKYDQPLAVEKENLKNFVVAEDYHQDYLKKNPNGYCHINVNQAAYPVIDASKYPKPSDEELKKTLSPEEYAVTQENQTERAFSNRYWDKFESGIYVDIATGEPLFSSKDKFESGCGWPSFTQPISPDVVTYKEDKSYNMTRMEVRSRVGDSHLGHVFTDGPQDKGGLRYCINSLSIRFIPKDQMEEKGYAYLLDYVD</sequence>
<comment type="function">
    <text evidence="1">Has an important function as a repair enzyme for proteins that have been inactivated by oxidation. Catalyzes the reversible oxidation-reduction of methionine sulfoxide in proteins to methionine (By similarity).</text>
</comment>
<comment type="catalytic activity">
    <reaction>
        <text>L-methionyl-[protein] + [thioredoxin]-disulfide + H2O = L-methionyl-(S)-S-oxide-[protein] + [thioredoxin]-dithiol</text>
        <dbReference type="Rhea" id="RHEA:14217"/>
        <dbReference type="Rhea" id="RHEA-COMP:10698"/>
        <dbReference type="Rhea" id="RHEA-COMP:10700"/>
        <dbReference type="Rhea" id="RHEA-COMP:12313"/>
        <dbReference type="Rhea" id="RHEA-COMP:12315"/>
        <dbReference type="ChEBI" id="CHEBI:15377"/>
        <dbReference type="ChEBI" id="CHEBI:16044"/>
        <dbReference type="ChEBI" id="CHEBI:29950"/>
        <dbReference type="ChEBI" id="CHEBI:44120"/>
        <dbReference type="ChEBI" id="CHEBI:50058"/>
        <dbReference type="EC" id="1.8.4.11"/>
    </reaction>
</comment>
<comment type="catalytic activity">
    <reaction>
        <text>[thioredoxin]-disulfide + L-methionine + H2O = L-methionine (S)-S-oxide + [thioredoxin]-dithiol</text>
        <dbReference type="Rhea" id="RHEA:19993"/>
        <dbReference type="Rhea" id="RHEA-COMP:10698"/>
        <dbReference type="Rhea" id="RHEA-COMP:10700"/>
        <dbReference type="ChEBI" id="CHEBI:15377"/>
        <dbReference type="ChEBI" id="CHEBI:29950"/>
        <dbReference type="ChEBI" id="CHEBI:50058"/>
        <dbReference type="ChEBI" id="CHEBI:57844"/>
        <dbReference type="ChEBI" id="CHEBI:58772"/>
        <dbReference type="EC" id="1.8.4.11"/>
    </reaction>
</comment>
<comment type="catalytic activity">
    <reaction>
        <text>L-methionyl-[protein] + [thioredoxin]-disulfide + H2O = L-methionyl-(R)-S-oxide-[protein] + [thioredoxin]-dithiol</text>
        <dbReference type="Rhea" id="RHEA:24164"/>
        <dbReference type="Rhea" id="RHEA-COMP:10698"/>
        <dbReference type="Rhea" id="RHEA-COMP:10700"/>
        <dbReference type="Rhea" id="RHEA-COMP:12313"/>
        <dbReference type="Rhea" id="RHEA-COMP:12314"/>
        <dbReference type="ChEBI" id="CHEBI:15377"/>
        <dbReference type="ChEBI" id="CHEBI:16044"/>
        <dbReference type="ChEBI" id="CHEBI:29950"/>
        <dbReference type="ChEBI" id="CHEBI:45764"/>
        <dbReference type="ChEBI" id="CHEBI:50058"/>
        <dbReference type="EC" id="1.8.4.12"/>
    </reaction>
</comment>
<comment type="similarity">
    <text evidence="3">In the N-terminal section; belongs to the MsrA Met sulfoxide reductase family.</text>
</comment>
<comment type="similarity">
    <text evidence="3">In the C-terminal section; belongs to the MsrB Met sulfoxide reductase family.</text>
</comment>
<comment type="sequence caution" evidence="3">
    <conflict type="erroneous initiation">
        <sequence resource="EMBL-CDS" id="AAK99381"/>
    </conflict>
</comment>
<reference key="1">
    <citation type="journal article" date="2001" name="J. Bacteriol.">
        <title>Genome of the bacterium Streptococcus pneumoniae strain R6.</title>
        <authorList>
            <person name="Hoskins J."/>
            <person name="Alborn W.E. Jr."/>
            <person name="Arnold J."/>
            <person name="Blaszczak L.C."/>
            <person name="Burgett S."/>
            <person name="DeHoff B.S."/>
            <person name="Estrem S.T."/>
            <person name="Fritz L."/>
            <person name="Fu D.-J."/>
            <person name="Fuller W."/>
            <person name="Geringer C."/>
            <person name="Gilmour R."/>
            <person name="Glass J.S."/>
            <person name="Khoja H."/>
            <person name="Kraft A.R."/>
            <person name="Lagace R.E."/>
            <person name="LeBlanc D.J."/>
            <person name="Lee L.N."/>
            <person name="Lefkowitz E.J."/>
            <person name="Lu J."/>
            <person name="Matsushima P."/>
            <person name="McAhren S.M."/>
            <person name="McHenney M."/>
            <person name="McLeaster K."/>
            <person name="Mundy C.W."/>
            <person name="Nicas T.I."/>
            <person name="Norris F.H."/>
            <person name="O'Gara M."/>
            <person name="Peery R.B."/>
            <person name="Robertson G.T."/>
            <person name="Rockey P."/>
            <person name="Sun P.-M."/>
            <person name="Winkler M.E."/>
            <person name="Yang Y."/>
            <person name="Young-Bellido M."/>
            <person name="Zhao G."/>
            <person name="Zook C.A."/>
            <person name="Baltz R.H."/>
            <person name="Jaskunas S.R."/>
            <person name="Rosteck P.R. Jr."/>
            <person name="Skatrud P.L."/>
            <person name="Glass J.I."/>
        </authorList>
    </citation>
    <scope>NUCLEOTIDE SEQUENCE [LARGE SCALE GENOMIC DNA]</scope>
    <source>
        <strain>ATCC BAA-255 / R6</strain>
    </source>
</reference>
<dbReference type="EC" id="1.8.4.11"/>
<dbReference type="EC" id="1.8.4.12"/>
<dbReference type="EMBL" id="AE007317">
    <property type="protein sequence ID" value="AAK99381.1"/>
    <property type="status" value="ALT_INIT"/>
    <property type="molecule type" value="Genomic_DNA"/>
</dbReference>
<dbReference type="PIR" id="A97944">
    <property type="entry name" value="A97944"/>
</dbReference>
<dbReference type="RefSeq" id="NP_358171.1">
    <property type="nucleotide sequence ID" value="NC_003098.1"/>
</dbReference>
<dbReference type="SMR" id="P65444"/>
<dbReference type="STRING" id="171101.spr0577"/>
<dbReference type="KEGG" id="spr:spr0577"/>
<dbReference type="PATRIC" id="fig|171101.6.peg.644"/>
<dbReference type="eggNOG" id="COG0225">
    <property type="taxonomic scope" value="Bacteria"/>
</dbReference>
<dbReference type="eggNOG" id="COG0229">
    <property type="taxonomic scope" value="Bacteria"/>
</dbReference>
<dbReference type="HOGENOM" id="CLU_031040_0_1_9"/>
<dbReference type="Proteomes" id="UP000000586">
    <property type="component" value="Chromosome"/>
</dbReference>
<dbReference type="GO" id="GO:0005737">
    <property type="term" value="C:cytoplasm"/>
    <property type="evidence" value="ECO:0000318"/>
    <property type="project" value="GO_Central"/>
</dbReference>
<dbReference type="GO" id="GO:0033744">
    <property type="term" value="F:L-methionine:thioredoxin-disulfide S-oxidoreductase activity"/>
    <property type="evidence" value="ECO:0007669"/>
    <property type="project" value="RHEA"/>
</dbReference>
<dbReference type="GO" id="GO:0033743">
    <property type="term" value="F:peptide-methionine (R)-S-oxide reductase activity"/>
    <property type="evidence" value="ECO:0000318"/>
    <property type="project" value="GO_Central"/>
</dbReference>
<dbReference type="GO" id="GO:0008113">
    <property type="term" value="F:peptide-methionine (S)-S-oxide reductase activity"/>
    <property type="evidence" value="ECO:0007669"/>
    <property type="project" value="UniProtKB-UniRule"/>
</dbReference>
<dbReference type="GO" id="GO:0036211">
    <property type="term" value="P:protein modification process"/>
    <property type="evidence" value="ECO:0007669"/>
    <property type="project" value="UniProtKB-UniRule"/>
</dbReference>
<dbReference type="GO" id="GO:0030091">
    <property type="term" value="P:protein repair"/>
    <property type="evidence" value="ECO:0007669"/>
    <property type="project" value="InterPro"/>
</dbReference>
<dbReference type="GO" id="GO:0006979">
    <property type="term" value="P:response to oxidative stress"/>
    <property type="evidence" value="ECO:0007669"/>
    <property type="project" value="InterPro"/>
</dbReference>
<dbReference type="FunFam" id="3.30.1060.10:FF:000007">
    <property type="entry name" value="Peptide methionine sulfoxide reductase msrA/msrB"/>
    <property type="match status" value="1"/>
</dbReference>
<dbReference type="FunFam" id="2.170.150.20:FF:000003">
    <property type="entry name" value="Peptide methionine sulfoxide reductase MsrB"/>
    <property type="match status" value="1"/>
</dbReference>
<dbReference type="Gene3D" id="2.170.150.20">
    <property type="entry name" value="Peptide methionine sulfoxide reductase"/>
    <property type="match status" value="1"/>
</dbReference>
<dbReference type="Gene3D" id="3.30.1060.10">
    <property type="entry name" value="Peptide methionine sulphoxide reductase MsrA"/>
    <property type="match status" value="1"/>
</dbReference>
<dbReference type="HAMAP" id="MF_01401">
    <property type="entry name" value="MsrA"/>
    <property type="match status" value="1"/>
</dbReference>
<dbReference type="HAMAP" id="MF_01400">
    <property type="entry name" value="MsrB"/>
    <property type="match status" value="1"/>
</dbReference>
<dbReference type="InterPro" id="IPR002569">
    <property type="entry name" value="Met_Sox_Rdtase_MsrA_dom"/>
</dbReference>
<dbReference type="InterPro" id="IPR036509">
    <property type="entry name" value="Met_Sox_Rdtase_MsrA_sf"/>
</dbReference>
<dbReference type="InterPro" id="IPR028427">
    <property type="entry name" value="Met_Sox_Rdtase_MsrB"/>
</dbReference>
<dbReference type="InterPro" id="IPR002579">
    <property type="entry name" value="Met_Sox_Rdtase_MsrB_dom"/>
</dbReference>
<dbReference type="InterPro" id="IPR011057">
    <property type="entry name" value="Mss4-like_sf"/>
</dbReference>
<dbReference type="NCBIfam" id="TIGR00401">
    <property type="entry name" value="msrA"/>
    <property type="match status" value="1"/>
</dbReference>
<dbReference type="NCBIfam" id="TIGR00357">
    <property type="entry name" value="peptide-methionine (R)-S-oxide reductase MsrB"/>
    <property type="match status" value="1"/>
</dbReference>
<dbReference type="PANTHER" id="PTHR10173">
    <property type="entry name" value="METHIONINE SULFOXIDE REDUCTASE"/>
    <property type="match status" value="1"/>
</dbReference>
<dbReference type="PANTHER" id="PTHR10173:SF59">
    <property type="entry name" value="PEPTIDE METHIONINE SULFOXIDE REDUCTASE MSRA_MSRB"/>
    <property type="match status" value="1"/>
</dbReference>
<dbReference type="Pfam" id="PF01625">
    <property type="entry name" value="PMSR"/>
    <property type="match status" value="1"/>
</dbReference>
<dbReference type="Pfam" id="PF01641">
    <property type="entry name" value="SelR"/>
    <property type="match status" value="1"/>
</dbReference>
<dbReference type="SUPFAM" id="SSF51316">
    <property type="entry name" value="Mss4-like"/>
    <property type="match status" value="1"/>
</dbReference>
<dbReference type="SUPFAM" id="SSF55068">
    <property type="entry name" value="Peptide methionine sulfoxide reductase"/>
    <property type="match status" value="1"/>
</dbReference>
<dbReference type="PROSITE" id="PS51790">
    <property type="entry name" value="MSRB"/>
    <property type="match status" value="1"/>
</dbReference>
<accession>P65444</accession>
<accession>Q97RX3</accession>
<gene>
    <name type="primary">msrAB2</name>
    <name type="synonym">msrA</name>
    <name type="ordered locus">spr0577</name>
</gene>
<organism>
    <name type="scientific">Streptococcus pneumoniae (strain ATCC BAA-255 / R6)</name>
    <dbReference type="NCBI Taxonomy" id="171101"/>
    <lineage>
        <taxon>Bacteria</taxon>
        <taxon>Bacillati</taxon>
        <taxon>Bacillota</taxon>
        <taxon>Bacilli</taxon>
        <taxon>Lactobacillales</taxon>
        <taxon>Streptococcaceae</taxon>
        <taxon>Streptococcus</taxon>
    </lineage>
</organism>
<keyword id="KW-0511">Multifunctional enzyme</keyword>
<keyword id="KW-0560">Oxidoreductase</keyword>
<keyword id="KW-1185">Reference proteome</keyword>
<name>MSAB2_STRR6</name>
<protein>
    <recommendedName>
        <fullName>Peptide methionine sulfoxide reductase MsrA/MsrB 2</fullName>
    </recommendedName>
    <domain>
        <recommendedName>
            <fullName>Peptide methionine sulfoxide reductase MsrA</fullName>
            <shortName>Protein-methionine-S-oxide reductase</shortName>
            <ecNumber>1.8.4.11</ecNumber>
        </recommendedName>
        <alternativeName>
            <fullName>Peptide-methionine (S)-S-oxide reductase</fullName>
            <shortName>Peptide Met(O) reductase</shortName>
        </alternativeName>
    </domain>
    <domain>
        <recommendedName>
            <fullName>Peptide methionine sulfoxide reductase MsrB</fullName>
            <ecNumber>1.8.4.12</ecNumber>
        </recommendedName>
        <alternativeName>
            <fullName>Peptide-methionine (R)-S-oxide reductase</fullName>
        </alternativeName>
    </domain>
</protein>
<feature type="chain" id="PRO_0000138520" description="Peptide methionine sulfoxide reductase MsrA/MsrB 2">
    <location>
        <begin position="1"/>
        <end position="311"/>
    </location>
</feature>
<feature type="domain" description="MsrB" evidence="2">
    <location>
        <begin position="172"/>
        <end position="295"/>
    </location>
</feature>
<feature type="region of interest" description="Peptide methionine sulfoxide reductase A">
    <location>
        <begin position="1"/>
        <end position="155"/>
    </location>
</feature>
<feature type="active site" evidence="1">
    <location>
        <position position="10"/>
    </location>
</feature>
<feature type="active site" description="Nucleophile" evidence="2">
    <location>
        <position position="284"/>
    </location>
</feature>